<comment type="function">
    <text evidence="1">Nucleotide-binding protein.</text>
</comment>
<comment type="similarity">
    <text evidence="1">Belongs to the YajQ family.</text>
</comment>
<sequence>MSKESSFDIVSKVDLSEVTNAINIALKEIKNRYDFKGSKSDISLDKDELVLISDDEFKLEQLKDVLIGKLIRRGVPTKNIQYGKIEPAAGGTVRQRAKLVQGIDKENAKKINTIIKNTGLKVKSQVQDDQIRVSGKSKDDLQKVIAAIREADLPIDVQFVNYR</sequence>
<feature type="chain" id="PRO_1000212336" description="Nucleotide-binding protein GWCH70_0711">
    <location>
        <begin position="1"/>
        <end position="163"/>
    </location>
</feature>
<accession>C5D742</accession>
<name>Y711_GEOSW</name>
<reference key="1">
    <citation type="submission" date="2009-06" db="EMBL/GenBank/DDBJ databases">
        <title>Complete sequence of chromosome of Geopacillus sp. WCH70.</title>
        <authorList>
            <consortium name="US DOE Joint Genome Institute"/>
            <person name="Lucas S."/>
            <person name="Copeland A."/>
            <person name="Lapidus A."/>
            <person name="Glavina del Rio T."/>
            <person name="Dalin E."/>
            <person name="Tice H."/>
            <person name="Bruce D."/>
            <person name="Goodwin L."/>
            <person name="Pitluck S."/>
            <person name="Chertkov O."/>
            <person name="Brettin T."/>
            <person name="Detter J.C."/>
            <person name="Han C."/>
            <person name="Larimer F."/>
            <person name="Land M."/>
            <person name="Hauser L."/>
            <person name="Kyrpides N."/>
            <person name="Mikhailova N."/>
            <person name="Brumm P."/>
            <person name="Mead D.A."/>
            <person name="Richardson P."/>
        </authorList>
    </citation>
    <scope>NUCLEOTIDE SEQUENCE [LARGE SCALE GENOMIC DNA]</scope>
    <source>
        <strain>WCH70</strain>
    </source>
</reference>
<organism>
    <name type="scientific">Geobacillus sp. (strain WCH70)</name>
    <dbReference type="NCBI Taxonomy" id="471223"/>
    <lineage>
        <taxon>Bacteria</taxon>
        <taxon>Bacillati</taxon>
        <taxon>Bacillota</taxon>
        <taxon>Bacilli</taxon>
        <taxon>Bacillales</taxon>
        <taxon>Anoxybacillaceae</taxon>
        <taxon>Geobacillus</taxon>
    </lineage>
</organism>
<evidence type="ECO:0000255" key="1">
    <source>
        <dbReference type="HAMAP-Rule" id="MF_00632"/>
    </source>
</evidence>
<proteinExistence type="inferred from homology"/>
<gene>
    <name type="ordered locus">GWCH70_0711</name>
</gene>
<protein>
    <recommendedName>
        <fullName evidence="1">Nucleotide-binding protein GWCH70_0711</fullName>
    </recommendedName>
</protein>
<keyword id="KW-0547">Nucleotide-binding</keyword>
<dbReference type="EMBL" id="CP001638">
    <property type="protein sequence ID" value="ACS23600.1"/>
    <property type="molecule type" value="Genomic_DNA"/>
</dbReference>
<dbReference type="SMR" id="C5D742"/>
<dbReference type="STRING" id="471223.GWCH70_0711"/>
<dbReference type="KEGG" id="gwc:GWCH70_0711"/>
<dbReference type="eggNOG" id="COG1666">
    <property type="taxonomic scope" value="Bacteria"/>
</dbReference>
<dbReference type="HOGENOM" id="CLU_099839_1_0_9"/>
<dbReference type="OrthoDB" id="9801447at2"/>
<dbReference type="GO" id="GO:0005829">
    <property type="term" value="C:cytosol"/>
    <property type="evidence" value="ECO:0007669"/>
    <property type="project" value="TreeGrafter"/>
</dbReference>
<dbReference type="GO" id="GO:0000166">
    <property type="term" value="F:nucleotide binding"/>
    <property type="evidence" value="ECO:0007669"/>
    <property type="project" value="TreeGrafter"/>
</dbReference>
<dbReference type="CDD" id="cd11740">
    <property type="entry name" value="YajQ_like"/>
    <property type="match status" value="1"/>
</dbReference>
<dbReference type="FunFam" id="3.30.70.990:FF:000002">
    <property type="entry name" value="UPF0234 protein LEP1GSC067_4943"/>
    <property type="match status" value="1"/>
</dbReference>
<dbReference type="FunFam" id="3.30.70.860:FF:000003">
    <property type="entry name" value="UPF0234 protein YBT020_06460"/>
    <property type="match status" value="1"/>
</dbReference>
<dbReference type="Gene3D" id="3.30.70.860">
    <property type="match status" value="1"/>
</dbReference>
<dbReference type="Gene3D" id="3.30.70.990">
    <property type="entry name" value="YajQ-like, domain 2"/>
    <property type="match status" value="1"/>
</dbReference>
<dbReference type="HAMAP" id="MF_00632">
    <property type="entry name" value="YajQ"/>
    <property type="match status" value="1"/>
</dbReference>
<dbReference type="InterPro" id="IPR007551">
    <property type="entry name" value="DUF520"/>
</dbReference>
<dbReference type="InterPro" id="IPR035571">
    <property type="entry name" value="UPF0234-like_C"/>
</dbReference>
<dbReference type="InterPro" id="IPR035570">
    <property type="entry name" value="UPF0234_N"/>
</dbReference>
<dbReference type="InterPro" id="IPR036183">
    <property type="entry name" value="YajQ-like_sf"/>
</dbReference>
<dbReference type="NCBIfam" id="NF003819">
    <property type="entry name" value="PRK05412.1"/>
    <property type="match status" value="1"/>
</dbReference>
<dbReference type="PANTHER" id="PTHR30476">
    <property type="entry name" value="UPF0234 PROTEIN YAJQ"/>
    <property type="match status" value="1"/>
</dbReference>
<dbReference type="PANTHER" id="PTHR30476:SF0">
    <property type="entry name" value="UPF0234 PROTEIN YAJQ"/>
    <property type="match status" value="1"/>
</dbReference>
<dbReference type="Pfam" id="PF04461">
    <property type="entry name" value="DUF520"/>
    <property type="match status" value="1"/>
</dbReference>
<dbReference type="SUPFAM" id="SSF89963">
    <property type="entry name" value="YajQ-like"/>
    <property type="match status" value="2"/>
</dbReference>